<evidence type="ECO:0000255" key="1">
    <source>
        <dbReference type="HAMAP-Rule" id="MF_03224"/>
    </source>
</evidence>
<evidence type="ECO:0000255" key="2">
    <source>
        <dbReference type="PROSITE-ProRule" id="PRU00054"/>
    </source>
</evidence>
<evidence type="ECO:0000269" key="3">
    <source>
    </source>
</evidence>
<evidence type="ECO:0000303" key="4">
    <source>
    </source>
</evidence>
<protein>
    <recommendedName>
        <fullName evidence="1">Cyanide hydratase</fullName>
        <shortName evidence="1">CHT</shortName>
        <ecNumber evidence="1">4.2.1.66</ecNumber>
    </recommendedName>
    <alternativeName>
        <fullName evidence="1">Cyanide-degrading nitrilase</fullName>
    </alternativeName>
    <alternativeName>
        <fullName evidence="1">Formamide hydrolyase</fullName>
    </alternativeName>
</protein>
<reference key="1">
    <citation type="journal article" date="2000" name="Mol. Gen. Genet.">
        <title>Characterisation of a cyanide hydratase gene in the phytopathogenic fungus Leptosphaeria maculans.</title>
        <authorList>
            <person name="Sexton A.C."/>
            <person name="Howlett B.J."/>
        </authorList>
    </citation>
    <scope>NUCLEOTIDE SEQUENCE [GENOMIC DNA]</scope>
    <scope>INDUCTION</scope>
    <source>
        <strain>M1</strain>
    </source>
</reference>
<accession>Q9P8V3</accession>
<proteinExistence type="evidence at transcript level"/>
<feature type="chain" id="PRO_0000440034" description="Cyanide hydratase">
    <location>
        <begin position="1"/>
        <end position="356"/>
    </location>
</feature>
<feature type="domain" description="CN hydrolase" evidence="2">
    <location>
        <begin position="6"/>
        <end position="285"/>
    </location>
</feature>
<feature type="active site" description="Proton acceptor" evidence="2">
    <location>
        <position position="46"/>
    </location>
</feature>
<feature type="active site" evidence="2">
    <location>
        <position position="128"/>
    </location>
</feature>
<feature type="active site" description="Nucleophile" evidence="2">
    <location>
        <position position="163"/>
    </location>
</feature>
<sequence>MPLTKYKAAAVTSEPAWFNLEAGVQKTIDFINEAGQAGCKLIAFPEVWIPGYPYWMWKINYQQSLPMLKKYRENSMAVDSDEFRRIRRAARDNQIHVSLGFSEIDHATLYLAQALISPTGEVLNHRRKIKPTHVEKLVYGDGAGDTFTSVVPTELGRLGQLNCWENMNPFLKALNVSAGEQIHIAAWPVYPGKETLKYPDPATNVADPASDLVTPAYAIETGTWTLAPFQRLSAEGLKMNTPEGVEPETDPTTYNGHARIYRPDGSLVVKPDKDFDGLLFVDIDLNECHLTKALADFSGHYMRPDLIRLLVDTRRKELVTEAEGNDGVKAYSTRERLGLNLPLDGSKEDEKVPVAL</sequence>
<organism>
    <name type="scientific">Leptosphaeria maculans</name>
    <name type="common">Blackleg fungus</name>
    <name type="synonym">Phoma lingam</name>
    <dbReference type="NCBI Taxonomy" id="5022"/>
    <lineage>
        <taxon>Eukaryota</taxon>
        <taxon>Fungi</taxon>
        <taxon>Dikarya</taxon>
        <taxon>Ascomycota</taxon>
        <taxon>Pezizomycotina</taxon>
        <taxon>Dothideomycetes</taxon>
        <taxon>Pleosporomycetidae</taxon>
        <taxon>Pleosporales</taxon>
        <taxon>Pleosporineae</taxon>
        <taxon>Leptosphaeriaceae</taxon>
        <taxon>Plenodomus</taxon>
        <taxon>Plenodomus lingam/Leptosphaeria maculans species complex</taxon>
    </lineage>
</organism>
<gene>
    <name evidence="4" type="primary">Cht</name>
</gene>
<comment type="function">
    <text evidence="1">Catalyzes the hydration of cyanide to formamide. Degradation of cyanide may be important for plant pathogenic fungi in infection of cyanogenic plants.</text>
</comment>
<comment type="catalytic activity">
    <reaction evidence="1">
        <text>formamide = hydrogen cyanide + H2O</text>
        <dbReference type="Rhea" id="RHEA:21720"/>
        <dbReference type="ChEBI" id="CHEBI:15377"/>
        <dbReference type="ChEBI" id="CHEBI:16397"/>
        <dbReference type="ChEBI" id="CHEBI:18407"/>
        <dbReference type="EC" id="4.2.1.66"/>
    </reaction>
</comment>
<comment type="subunit">
    <text evidence="1">Oligomer of dimers, forming left-handed helical fibers.</text>
</comment>
<comment type="induction">
    <text evidence="3">By cyanide and propionitrile.</text>
</comment>
<comment type="similarity">
    <text evidence="1">Belongs to the carbon-nitrogen hydrolase superfamily. Nitrilase family.</text>
</comment>
<keyword id="KW-0378">Hydrolase</keyword>
<keyword id="KW-0456">Lyase</keyword>
<name>CHT_LEPMC</name>
<dbReference type="EC" id="4.2.1.66" evidence="1"/>
<dbReference type="EMBL" id="AF192405">
    <property type="protein sequence ID" value="AAF66098.1"/>
    <property type="molecule type" value="Genomic_DNA"/>
</dbReference>
<dbReference type="SMR" id="Q9P8V3"/>
<dbReference type="GO" id="GO:0030196">
    <property type="term" value="F:cyanide hydratase activity"/>
    <property type="evidence" value="ECO:0007669"/>
    <property type="project" value="UniProtKB-UniRule"/>
</dbReference>
<dbReference type="GO" id="GO:0000257">
    <property type="term" value="F:nitrilase activity"/>
    <property type="evidence" value="ECO:0007669"/>
    <property type="project" value="UniProtKB-ARBA"/>
</dbReference>
<dbReference type="GO" id="GO:0019500">
    <property type="term" value="P:cyanide catabolic process"/>
    <property type="evidence" value="ECO:0007669"/>
    <property type="project" value="UniProtKB-UniRule"/>
</dbReference>
<dbReference type="CDD" id="cd07564">
    <property type="entry name" value="nitrilases_CHs"/>
    <property type="match status" value="1"/>
</dbReference>
<dbReference type="FunFam" id="3.60.110.10:FF:000011">
    <property type="entry name" value="Cyanide hydratase"/>
    <property type="match status" value="1"/>
</dbReference>
<dbReference type="Gene3D" id="3.60.110.10">
    <property type="entry name" value="Carbon-nitrogen hydrolase"/>
    <property type="match status" value="1"/>
</dbReference>
<dbReference type="HAMAP" id="MF_03224">
    <property type="entry name" value="CN_hydrolase"/>
    <property type="match status" value="1"/>
</dbReference>
<dbReference type="InterPro" id="IPR003010">
    <property type="entry name" value="C-N_Hydrolase"/>
</dbReference>
<dbReference type="InterPro" id="IPR036526">
    <property type="entry name" value="C-N_Hydrolase_sf"/>
</dbReference>
<dbReference type="InterPro" id="IPR037544">
    <property type="entry name" value="CN_hydrolase"/>
</dbReference>
<dbReference type="InterPro" id="IPR000132">
    <property type="entry name" value="Nitrilase/CN_hydratase_CS"/>
</dbReference>
<dbReference type="InterPro" id="IPR044149">
    <property type="entry name" value="Nitrilases_CHs"/>
</dbReference>
<dbReference type="PANTHER" id="PTHR46044:SF4">
    <property type="entry name" value="CYANIDE HYDRATASE"/>
    <property type="match status" value="1"/>
</dbReference>
<dbReference type="PANTHER" id="PTHR46044">
    <property type="entry name" value="NITRILASE"/>
    <property type="match status" value="1"/>
</dbReference>
<dbReference type="Pfam" id="PF00795">
    <property type="entry name" value="CN_hydrolase"/>
    <property type="match status" value="1"/>
</dbReference>
<dbReference type="SUPFAM" id="SSF56317">
    <property type="entry name" value="Carbon-nitrogen hydrolase"/>
    <property type="match status" value="1"/>
</dbReference>
<dbReference type="PROSITE" id="PS50263">
    <property type="entry name" value="CN_HYDROLASE"/>
    <property type="match status" value="1"/>
</dbReference>
<dbReference type="PROSITE" id="PS00920">
    <property type="entry name" value="NITRIL_CHT_1"/>
    <property type="match status" value="1"/>
</dbReference>
<dbReference type="PROSITE" id="PS00921">
    <property type="entry name" value="NITRIL_CHT_2"/>
    <property type="match status" value="1"/>
</dbReference>